<name>HBA_MACFU</name>
<comment type="function">
    <text>Involved in oxygen transport from the lung to the various peripheral tissues.</text>
</comment>
<comment type="function">
    <molecule>Hemopressin</molecule>
    <text evidence="2">Hemopressin acts as an antagonist peptide of the cannabinoid receptor CNR1. Hemopressin-binding efficiently blocks cannabinoid receptor CNR1 and subsequent signaling.</text>
</comment>
<comment type="subunit">
    <text>Heterotetramer of two alpha chains and two beta chains.</text>
</comment>
<comment type="tissue specificity">
    <text>Red blood cells.</text>
</comment>
<comment type="similarity">
    <text evidence="4">Belongs to the globin family.</text>
</comment>
<gene>
    <name type="primary">HBA</name>
</gene>
<organism>
    <name type="scientific">Macaca fuscata fuscata</name>
    <name type="common">Japanese macaque</name>
    <dbReference type="NCBI Taxonomy" id="9543"/>
    <lineage>
        <taxon>Eukaryota</taxon>
        <taxon>Metazoa</taxon>
        <taxon>Chordata</taxon>
        <taxon>Craniata</taxon>
        <taxon>Vertebrata</taxon>
        <taxon>Euteleostomi</taxon>
        <taxon>Mammalia</taxon>
        <taxon>Eutheria</taxon>
        <taxon>Euarchontoglires</taxon>
        <taxon>Primates</taxon>
        <taxon>Haplorrhini</taxon>
        <taxon>Catarrhini</taxon>
        <taxon>Cercopithecidae</taxon>
        <taxon>Cercopithecinae</taxon>
        <taxon>Macaca</taxon>
    </lineage>
</organism>
<keyword id="KW-0007">Acetylation</keyword>
<keyword id="KW-0903">Direct protein sequencing</keyword>
<keyword id="KW-0349">Heme</keyword>
<keyword id="KW-0408">Iron</keyword>
<keyword id="KW-0479">Metal-binding</keyword>
<keyword id="KW-0561">Oxygen transport</keyword>
<keyword id="KW-0597">Phosphoprotein</keyword>
<keyword id="KW-0813">Transport</keyword>
<accession>P63107</accession>
<accession>P01925</accession>
<accession>Q28515</accession>
<proteinExistence type="evidence at protein level"/>
<reference key="1">
    <citation type="journal article" date="1973" name="Int. J. Pept. Protein Res.">
        <title>The primary structures of alpha and beta chains of adult hemoglobin of the Japanese monkey (Macata fuscata fuscata). Biochemical studies on hemoglobins and myoglobins. XI.</title>
        <authorList>
            <person name="Matsuda G."/>
            <person name="Maita T."/>
            <person name="Ota H."/>
            <person name="Araya A."/>
            <person name="Nakashima Y."/>
            <person name="Ishii U."/>
            <person name="Nakashima M."/>
        </authorList>
    </citation>
    <scope>PROTEIN SEQUENCE OF 2-142</scope>
</reference>
<dbReference type="PIR" id="A04619">
    <property type="entry name" value="HAMQJ"/>
</dbReference>
<dbReference type="SMR" id="P63107"/>
<dbReference type="GO" id="GO:0072562">
    <property type="term" value="C:blood microparticle"/>
    <property type="evidence" value="ECO:0007669"/>
    <property type="project" value="TreeGrafter"/>
</dbReference>
<dbReference type="GO" id="GO:0031838">
    <property type="term" value="C:haptoglobin-hemoglobin complex"/>
    <property type="evidence" value="ECO:0007669"/>
    <property type="project" value="TreeGrafter"/>
</dbReference>
<dbReference type="GO" id="GO:0005833">
    <property type="term" value="C:hemoglobin complex"/>
    <property type="evidence" value="ECO:0007669"/>
    <property type="project" value="InterPro"/>
</dbReference>
<dbReference type="GO" id="GO:0031720">
    <property type="term" value="F:haptoglobin binding"/>
    <property type="evidence" value="ECO:0007669"/>
    <property type="project" value="TreeGrafter"/>
</dbReference>
<dbReference type="GO" id="GO:0020037">
    <property type="term" value="F:heme binding"/>
    <property type="evidence" value="ECO:0007669"/>
    <property type="project" value="InterPro"/>
</dbReference>
<dbReference type="GO" id="GO:0005506">
    <property type="term" value="F:iron ion binding"/>
    <property type="evidence" value="ECO:0007669"/>
    <property type="project" value="InterPro"/>
</dbReference>
<dbReference type="GO" id="GO:0043177">
    <property type="term" value="F:organic acid binding"/>
    <property type="evidence" value="ECO:0007669"/>
    <property type="project" value="TreeGrafter"/>
</dbReference>
<dbReference type="GO" id="GO:0019825">
    <property type="term" value="F:oxygen binding"/>
    <property type="evidence" value="ECO:0007669"/>
    <property type="project" value="InterPro"/>
</dbReference>
<dbReference type="GO" id="GO:0005344">
    <property type="term" value="F:oxygen carrier activity"/>
    <property type="evidence" value="ECO:0007669"/>
    <property type="project" value="UniProtKB-KW"/>
</dbReference>
<dbReference type="GO" id="GO:0004601">
    <property type="term" value="F:peroxidase activity"/>
    <property type="evidence" value="ECO:0007669"/>
    <property type="project" value="TreeGrafter"/>
</dbReference>
<dbReference type="GO" id="GO:0042744">
    <property type="term" value="P:hydrogen peroxide catabolic process"/>
    <property type="evidence" value="ECO:0007669"/>
    <property type="project" value="TreeGrafter"/>
</dbReference>
<dbReference type="CDD" id="cd08927">
    <property type="entry name" value="Hb-alpha-like"/>
    <property type="match status" value="1"/>
</dbReference>
<dbReference type="FunFam" id="1.10.490.10:FF:000002">
    <property type="entry name" value="Hemoglobin subunit alpha"/>
    <property type="match status" value="1"/>
</dbReference>
<dbReference type="Gene3D" id="1.10.490.10">
    <property type="entry name" value="Globins"/>
    <property type="match status" value="1"/>
</dbReference>
<dbReference type="InterPro" id="IPR000971">
    <property type="entry name" value="Globin"/>
</dbReference>
<dbReference type="InterPro" id="IPR009050">
    <property type="entry name" value="Globin-like_sf"/>
</dbReference>
<dbReference type="InterPro" id="IPR012292">
    <property type="entry name" value="Globin/Proto"/>
</dbReference>
<dbReference type="InterPro" id="IPR002338">
    <property type="entry name" value="Hemoglobin_a-typ"/>
</dbReference>
<dbReference type="InterPro" id="IPR050056">
    <property type="entry name" value="Hemoglobin_oxygen_transport"/>
</dbReference>
<dbReference type="InterPro" id="IPR002339">
    <property type="entry name" value="Hemoglobin_pi"/>
</dbReference>
<dbReference type="PANTHER" id="PTHR11442">
    <property type="entry name" value="HEMOGLOBIN FAMILY MEMBER"/>
    <property type="match status" value="1"/>
</dbReference>
<dbReference type="PANTHER" id="PTHR11442:SF48">
    <property type="entry name" value="HEMOGLOBIN SUBUNIT ALPHA"/>
    <property type="match status" value="1"/>
</dbReference>
<dbReference type="Pfam" id="PF00042">
    <property type="entry name" value="Globin"/>
    <property type="match status" value="1"/>
</dbReference>
<dbReference type="PRINTS" id="PR00612">
    <property type="entry name" value="ALPHAHAEM"/>
</dbReference>
<dbReference type="PRINTS" id="PR00815">
    <property type="entry name" value="PIHAEM"/>
</dbReference>
<dbReference type="SUPFAM" id="SSF46458">
    <property type="entry name" value="Globin-like"/>
    <property type="match status" value="1"/>
</dbReference>
<dbReference type="PROSITE" id="PS01033">
    <property type="entry name" value="GLOBIN"/>
    <property type="match status" value="1"/>
</dbReference>
<protein>
    <recommendedName>
        <fullName>Hemoglobin subunit alpha</fullName>
    </recommendedName>
    <alternativeName>
        <fullName>Alpha-globin</fullName>
    </alternativeName>
    <alternativeName>
        <fullName>Hemoglobin alpha chain</fullName>
    </alternativeName>
    <component>
        <recommendedName>
            <fullName evidence="2">Hemopressin</fullName>
        </recommendedName>
    </component>
</protein>
<feature type="initiator methionine" description="Removed" evidence="5">
    <location>
        <position position="1"/>
    </location>
</feature>
<feature type="chain" id="PRO_0000052679" description="Hemoglobin subunit alpha">
    <location>
        <begin position="2"/>
        <end position="142"/>
    </location>
</feature>
<feature type="peptide" id="PRO_0000455897" description="Hemopressin" evidence="2">
    <location>
        <begin position="96"/>
        <end position="104"/>
    </location>
</feature>
<feature type="domain" description="Globin" evidence="4">
    <location>
        <begin position="2"/>
        <end position="142"/>
    </location>
</feature>
<feature type="binding site" evidence="4">
    <location>
        <position position="59"/>
    </location>
    <ligand>
        <name>O2</name>
        <dbReference type="ChEBI" id="CHEBI:15379"/>
    </ligand>
</feature>
<feature type="binding site" description="proximal binding residue" evidence="4">
    <location>
        <position position="88"/>
    </location>
    <ligand>
        <name>heme b</name>
        <dbReference type="ChEBI" id="CHEBI:60344"/>
    </ligand>
    <ligandPart>
        <name>Fe</name>
        <dbReference type="ChEBI" id="CHEBI:18248"/>
    </ligandPart>
</feature>
<feature type="modified residue" description="Phosphoserine" evidence="3">
    <location>
        <position position="4"/>
    </location>
</feature>
<feature type="modified residue" description="N6-succinyllysine" evidence="1">
    <location>
        <position position="8"/>
    </location>
</feature>
<feature type="modified residue" description="N6-succinyllysine" evidence="1">
    <location>
        <position position="12"/>
    </location>
</feature>
<feature type="modified residue" description="N6-acetyllysine; alternate" evidence="3">
    <location>
        <position position="17"/>
    </location>
</feature>
<feature type="modified residue" description="N6-succinyllysine; alternate" evidence="1">
    <location>
        <position position="17"/>
    </location>
</feature>
<feature type="modified residue" description="Phosphotyrosine" evidence="3">
    <location>
        <position position="25"/>
    </location>
</feature>
<feature type="modified residue" description="Phosphoserine" evidence="3">
    <location>
        <position position="36"/>
    </location>
</feature>
<feature type="modified residue" description="N6-succinyllysine" evidence="1">
    <location>
        <position position="41"/>
    </location>
</feature>
<feature type="modified residue" description="Phosphoserine" evidence="3">
    <location>
        <position position="50"/>
    </location>
</feature>
<feature type="modified residue" description="Phosphoserine" evidence="1">
    <location>
        <position position="103"/>
    </location>
</feature>
<feature type="modified residue" description="Phosphothreonine" evidence="1">
    <location>
        <position position="109"/>
    </location>
</feature>
<feature type="modified residue" description="Phosphoserine" evidence="1">
    <location>
        <position position="125"/>
    </location>
</feature>
<feature type="modified residue" description="Phosphoserine" evidence="1">
    <location>
        <position position="132"/>
    </location>
</feature>
<feature type="modified residue" description="Phosphothreonine" evidence="1">
    <location>
        <position position="135"/>
    </location>
</feature>
<feature type="modified residue" description="Phosphothreonine" evidence="1">
    <location>
        <position position="138"/>
    </location>
</feature>
<feature type="modified residue" description="Phosphoserine" evidence="1">
    <location>
        <position position="139"/>
    </location>
</feature>
<sequence>MVLSPADKSNVKAAWGKVGGHAGEYGAEALERMFLSFPTTKTYFPHFDLSHGSAQVKGHGKKVADALTLAVGHVDDMPNALSALSDLHAHKLRVDPVNFKLLSHCLLVTLAAHLPAEFTPAVHASLDKFLASVSTVLTSKYR</sequence>
<evidence type="ECO:0000250" key="1">
    <source>
        <dbReference type="UniProtKB" id="P01942"/>
    </source>
</evidence>
<evidence type="ECO:0000250" key="2">
    <source>
        <dbReference type="UniProtKB" id="P01946"/>
    </source>
</evidence>
<evidence type="ECO:0000250" key="3">
    <source>
        <dbReference type="UniProtKB" id="P69905"/>
    </source>
</evidence>
<evidence type="ECO:0000255" key="4">
    <source>
        <dbReference type="PROSITE-ProRule" id="PRU00238"/>
    </source>
</evidence>
<evidence type="ECO:0000269" key="5">
    <source>
    </source>
</evidence>